<sequence length="315" mass="35039">MKMSKLSDLEGHEDRVWNVAWNPSGTILASCGGDKSIRLWGLEGGSWVCKSVLLDGHQRTVRGVSWSNCGRYLASSSFDGTTCIWRRQDDTFESCATLEGHENEVKACGWSPSGRFLATCSRDKTVWIWEVGEDEEFECASVQTCHSQDVKKVLWHPDRDELASASYDNTIRFFCEEVDDWQCYCTLDKHASTVWGLSFGPGPEPQLASCAADGSVYVWGTKGDRRSWELCGTLERHPRPVYDVSWCRTRGFLATACGDNAVRVFVKDGGDCSWRLGCTLTQAHSQDVNSVSWSPSGGLLASAGDDGYVRLWQID</sequence>
<dbReference type="EMBL" id="DS961804">
    <property type="protein sequence ID" value="EEC19443.1"/>
    <property type="molecule type" value="Genomic_DNA"/>
</dbReference>
<dbReference type="RefSeq" id="XP_002415776.1">
    <property type="nucleotide sequence ID" value="XM_002415731.1"/>
</dbReference>
<dbReference type="SMR" id="B7QKS1"/>
<dbReference type="STRING" id="6945.B7QKS1"/>
<dbReference type="PaxDb" id="6945-B7QKS1"/>
<dbReference type="EnsemblMetazoa" id="ISCW023049-RA">
    <property type="protein sequence ID" value="ISCW023049-PA"/>
    <property type="gene ID" value="ISCW023049"/>
</dbReference>
<dbReference type="KEGG" id="isc:8042725"/>
<dbReference type="CTD" id="9391"/>
<dbReference type="VEuPathDB" id="VectorBase:ISCI023049"/>
<dbReference type="VEuPathDB" id="VectorBase:ISCP_008739"/>
<dbReference type="VEuPathDB" id="VectorBase:ISCW023049"/>
<dbReference type="HOGENOM" id="CLU_000288_57_8_1"/>
<dbReference type="InParanoid" id="B7QKS1"/>
<dbReference type="OrthoDB" id="284782at2759"/>
<dbReference type="PhylomeDB" id="B7QKS1"/>
<dbReference type="Proteomes" id="UP000001555">
    <property type="component" value="Unassembled WGS sequence"/>
</dbReference>
<dbReference type="GO" id="GO:0097361">
    <property type="term" value="C:cytosolic [4Fe-4S] assembly targeting complex"/>
    <property type="evidence" value="ECO:0000318"/>
    <property type="project" value="GO_Central"/>
</dbReference>
<dbReference type="GO" id="GO:0016226">
    <property type="term" value="P:iron-sulfur cluster assembly"/>
    <property type="evidence" value="ECO:0000318"/>
    <property type="project" value="GO_Central"/>
</dbReference>
<dbReference type="GO" id="GO:0051604">
    <property type="term" value="P:protein maturation"/>
    <property type="evidence" value="ECO:0000250"/>
    <property type="project" value="UniProtKB"/>
</dbReference>
<dbReference type="CDD" id="cd00200">
    <property type="entry name" value="WD40"/>
    <property type="match status" value="1"/>
</dbReference>
<dbReference type="FunFam" id="2.130.10.10:FF:000136">
    <property type="entry name" value="Probable cytosolic iron-sulfur protein assembly protein CIAO1"/>
    <property type="match status" value="1"/>
</dbReference>
<dbReference type="Gene3D" id="2.130.10.10">
    <property type="entry name" value="YVTN repeat-like/Quinoprotein amine dehydrogenase"/>
    <property type="match status" value="1"/>
</dbReference>
<dbReference type="HAMAP" id="MF_03037">
    <property type="entry name" value="ciao1"/>
    <property type="match status" value="1"/>
</dbReference>
<dbReference type="InterPro" id="IPR028608">
    <property type="entry name" value="CIAO1/Cia1"/>
</dbReference>
<dbReference type="InterPro" id="IPR020472">
    <property type="entry name" value="G-protein_beta_WD-40_rep"/>
</dbReference>
<dbReference type="InterPro" id="IPR015943">
    <property type="entry name" value="WD40/YVTN_repeat-like_dom_sf"/>
</dbReference>
<dbReference type="InterPro" id="IPR019775">
    <property type="entry name" value="WD40_repeat_CS"/>
</dbReference>
<dbReference type="InterPro" id="IPR036322">
    <property type="entry name" value="WD40_repeat_dom_sf"/>
</dbReference>
<dbReference type="InterPro" id="IPR001680">
    <property type="entry name" value="WD40_rpt"/>
</dbReference>
<dbReference type="PANTHER" id="PTHR19920:SF0">
    <property type="entry name" value="CYTOSOLIC IRON-SULFUR PROTEIN ASSEMBLY PROTEIN CIAO1-RELATED"/>
    <property type="match status" value="1"/>
</dbReference>
<dbReference type="PANTHER" id="PTHR19920">
    <property type="entry name" value="WD40 PROTEIN CIAO1"/>
    <property type="match status" value="1"/>
</dbReference>
<dbReference type="Pfam" id="PF00400">
    <property type="entry name" value="WD40"/>
    <property type="match status" value="7"/>
</dbReference>
<dbReference type="PRINTS" id="PR00320">
    <property type="entry name" value="GPROTEINBRPT"/>
</dbReference>
<dbReference type="SMART" id="SM00320">
    <property type="entry name" value="WD40"/>
    <property type="match status" value="7"/>
</dbReference>
<dbReference type="SUPFAM" id="SSF50978">
    <property type="entry name" value="WD40 repeat-like"/>
    <property type="match status" value="1"/>
</dbReference>
<dbReference type="PROSITE" id="PS00678">
    <property type="entry name" value="WD_REPEATS_1"/>
    <property type="match status" value="1"/>
</dbReference>
<dbReference type="PROSITE" id="PS50082">
    <property type="entry name" value="WD_REPEATS_2"/>
    <property type="match status" value="6"/>
</dbReference>
<dbReference type="PROSITE" id="PS50294">
    <property type="entry name" value="WD_REPEATS_REGION"/>
    <property type="match status" value="1"/>
</dbReference>
<name>CIAO1_IXOSC</name>
<protein>
    <recommendedName>
        <fullName evidence="1">Probable cytosolic iron-sulfur protein assembly protein CIAO1 homolog</fullName>
    </recommendedName>
</protein>
<organism>
    <name type="scientific">Ixodes scapularis</name>
    <name type="common">Black-legged tick</name>
    <name type="synonym">Deer tick</name>
    <dbReference type="NCBI Taxonomy" id="6945"/>
    <lineage>
        <taxon>Eukaryota</taxon>
        <taxon>Metazoa</taxon>
        <taxon>Ecdysozoa</taxon>
        <taxon>Arthropoda</taxon>
        <taxon>Chelicerata</taxon>
        <taxon>Arachnida</taxon>
        <taxon>Acari</taxon>
        <taxon>Parasitiformes</taxon>
        <taxon>Ixodida</taxon>
        <taxon>Ixodoidea</taxon>
        <taxon>Ixodidae</taxon>
        <taxon>Ixodinae</taxon>
        <taxon>Ixodes</taxon>
    </lineage>
</organism>
<comment type="function">
    <text evidence="1">Essential component of the cytosolic iron-sulfur (Fe/S) protein assembly machinery. Required for the maturation of extramitochondrial Fe/S proteins.</text>
</comment>
<comment type="similarity">
    <text evidence="1">Belongs to the WD repeat CIA1 family.</text>
</comment>
<feature type="chain" id="PRO_0000382495" description="Probable cytosolic iron-sulfur protein assembly protein CIAO1 homolog">
    <location>
        <begin position="1"/>
        <end position="315"/>
    </location>
</feature>
<feature type="repeat" description="WD 1">
    <location>
        <begin position="11"/>
        <end position="50"/>
    </location>
</feature>
<feature type="repeat" description="WD 2">
    <location>
        <begin position="56"/>
        <end position="95"/>
    </location>
</feature>
<feature type="repeat" description="WD 3">
    <location>
        <begin position="100"/>
        <end position="139"/>
    </location>
</feature>
<feature type="repeat" description="WD 4">
    <location>
        <begin position="145"/>
        <end position="188"/>
    </location>
</feature>
<feature type="repeat" description="WD 5">
    <location>
        <begin position="189"/>
        <end position="229"/>
    </location>
</feature>
<feature type="repeat" description="WD 6">
    <location>
        <begin position="236"/>
        <end position="275"/>
    </location>
</feature>
<feature type="repeat" description="WD 7">
    <location>
        <begin position="283"/>
        <end position="315"/>
    </location>
</feature>
<accession>B7QKS1</accession>
<reference key="1">
    <citation type="submission" date="2008-03" db="EMBL/GenBank/DDBJ databases">
        <title>Annotation of Ixodes scapularis.</title>
        <authorList>
            <consortium name="Ixodes scapularis Genome Project Consortium"/>
            <person name="Caler E."/>
            <person name="Hannick L.I."/>
            <person name="Bidwell S."/>
            <person name="Joardar V."/>
            <person name="Thiagarajan M."/>
            <person name="Amedeo P."/>
            <person name="Galinsky K.J."/>
            <person name="Schobel S."/>
            <person name="Inman J."/>
            <person name="Hostetler J."/>
            <person name="Miller J."/>
            <person name="Hammond M."/>
            <person name="Megy K."/>
            <person name="Lawson D."/>
            <person name="Kodira C."/>
            <person name="Sutton G."/>
            <person name="Meyer J."/>
            <person name="Hill C.A."/>
            <person name="Birren B."/>
            <person name="Nene V."/>
            <person name="Collins F."/>
            <person name="Alarcon-Chaidez F."/>
            <person name="Wikel S."/>
            <person name="Strausberg R."/>
        </authorList>
    </citation>
    <scope>NUCLEOTIDE SEQUENCE [LARGE SCALE GENOMIC DNA]</scope>
    <source>
        <strain>Wikel</strain>
    </source>
</reference>
<evidence type="ECO:0000255" key="1">
    <source>
        <dbReference type="HAMAP-Rule" id="MF_03037"/>
    </source>
</evidence>
<proteinExistence type="inferred from homology"/>
<keyword id="KW-1185">Reference proteome</keyword>
<keyword id="KW-0677">Repeat</keyword>
<keyword id="KW-0853">WD repeat</keyword>
<gene>
    <name type="ORF">ISCW023049</name>
</gene>